<proteinExistence type="evidence at transcript level"/>
<sequence>MKFFALFIYRPVATILLSVAITLCGILGFRMLPVAPLPQVDFPVIMVSASLPGASPETMASSVATPLERSLGRIAGVSEMTSSSSLGSTRIILQFDFDRDINGAARDVQAAINAAQSLLPSGMPSRPTYRKANPSDAPIMILTLTSDTYSQGELYDFASTQLAPTISQIDGVGDVDVGGSSLPAVRVGLNPQALFNQGVSLDDVRTAISNANVRKPQGALEDGTHRWQIQTNDELKTAAEYQPLIIHYNNGGAVRLGDVATVTDSVQDVRNAGMTNAKPAILLMIRKLPEANIIQTVDSIRARLPELQSTIPAAIDLQIAQDRSPTIRASLEEVEQTLIISVALVILVVFLFLRSGRATIIPAVAVPVSLIGTFAAMYLCGFSLNNLSLMALTIATGFVVDDAIVVLENIARHLEAGMKPLQAALQGTREVGFTVLSMSLSLVAVFLPLLLMGGLPGRLLREFAVTLSVAIGISLLVSLTLTPMMCGWMLKASKPREQKRLRGFGRMLVALQQGYGKSLKWVLNHTRLVGVVLLGTIALNIWLYISIPKTFFPEQDTGVLMGGIQADQSISFQAMRGKLQDFMKIIRDDPAVDNVTGFTGGSRVNSGMMFITLKPRGERSETAQQIIDRLRKKLAKEPGANLFLMAVQDIRVGGRQANASYQYTLLSDDLAALREWEPKIRKKLATLPELADVNSDQEDNGAEMNLIYDRDTMARLGIDVQAANSLLNNAFGQRQISTIYQPMNQYKVVMEVDPRYTQDISALEKMFVINNEGKAIPLSYFAKWQPANAPLSVNHQGLSAASTISFNLPTGKSLSDASAAIDRAMTQLGVPSTVRGSFAGTAQVFQETMNSQVILIIAAIATVYIVLGILYESYVHPLTILSTLPSAGVGALLALELFNAPFSLIALIGIMLLIGIVKKNAIMMVDFALEAQRHGNLTPQEAIFQACLLRFRPIMMTTLAALFGALPLVLSGGDGSELRQPLGITIVGGLVMSQLLTLYTTPVVYLFFDRLRLRFSRKPKQAVTE</sequence>
<keyword id="KW-0997">Cell inner membrane</keyword>
<keyword id="KW-1003">Cell membrane</keyword>
<keyword id="KW-0472">Membrane</keyword>
<keyword id="KW-1185">Reference proteome</keyword>
<keyword id="KW-0812">Transmembrane</keyword>
<keyword id="KW-1133">Transmembrane helix</keyword>
<keyword id="KW-0813">Transport</keyword>
<dbReference type="EMBL" id="FM180568">
    <property type="protein sequence ID" value="CAS09767.1"/>
    <property type="molecule type" value="Genomic_DNA"/>
</dbReference>
<dbReference type="RefSeq" id="WP_000667559.1">
    <property type="nucleotide sequence ID" value="NC_011601.1"/>
</dbReference>
<dbReference type="SMR" id="B7UTB4"/>
<dbReference type="KEGG" id="ecg:E2348C_2219"/>
<dbReference type="HOGENOM" id="CLU_002755_1_2_6"/>
<dbReference type="Proteomes" id="UP000008205">
    <property type="component" value="Chromosome"/>
</dbReference>
<dbReference type="GO" id="GO:0005886">
    <property type="term" value="C:plasma membrane"/>
    <property type="evidence" value="ECO:0007669"/>
    <property type="project" value="UniProtKB-SubCell"/>
</dbReference>
<dbReference type="GO" id="GO:0042910">
    <property type="term" value="F:xenobiotic transmembrane transporter activity"/>
    <property type="evidence" value="ECO:0007669"/>
    <property type="project" value="TreeGrafter"/>
</dbReference>
<dbReference type="FunFam" id="1.20.1640.10:FF:000001">
    <property type="entry name" value="Efflux pump membrane transporter"/>
    <property type="match status" value="1"/>
</dbReference>
<dbReference type="FunFam" id="3.30.70.1430:FF:000001">
    <property type="entry name" value="Efflux pump membrane transporter"/>
    <property type="match status" value="1"/>
</dbReference>
<dbReference type="FunFam" id="3.30.2090.10:FF:000004">
    <property type="entry name" value="Multidrug resistance protein MdtC"/>
    <property type="match status" value="1"/>
</dbReference>
<dbReference type="FunFam" id="3.30.2090.10:FF:000005">
    <property type="entry name" value="Multidrug resistance protein MdtC"/>
    <property type="match status" value="1"/>
</dbReference>
<dbReference type="FunFam" id="3.30.70.1430:FF:000004">
    <property type="entry name" value="Multidrug resistance protein MdtC"/>
    <property type="match status" value="1"/>
</dbReference>
<dbReference type="Gene3D" id="3.30.70.1430">
    <property type="entry name" value="Multidrug efflux transporter AcrB pore domain"/>
    <property type="match status" value="2"/>
</dbReference>
<dbReference type="Gene3D" id="3.30.70.1440">
    <property type="entry name" value="Multidrug efflux transporter AcrB pore domain"/>
    <property type="match status" value="1"/>
</dbReference>
<dbReference type="Gene3D" id="3.30.70.1320">
    <property type="entry name" value="Multidrug efflux transporter AcrB pore domain like"/>
    <property type="match status" value="1"/>
</dbReference>
<dbReference type="Gene3D" id="3.30.2090.10">
    <property type="entry name" value="Multidrug efflux transporter AcrB TolC docking domain, DN and DC subdomains"/>
    <property type="match status" value="2"/>
</dbReference>
<dbReference type="Gene3D" id="1.20.1640.10">
    <property type="entry name" value="Multidrug efflux transporter AcrB transmembrane domain"/>
    <property type="match status" value="2"/>
</dbReference>
<dbReference type="HAMAP" id="MF_01424">
    <property type="entry name" value="MdtC"/>
    <property type="match status" value="1"/>
</dbReference>
<dbReference type="InterPro" id="IPR027463">
    <property type="entry name" value="AcrB_DN_DC_subdom"/>
</dbReference>
<dbReference type="InterPro" id="IPR001036">
    <property type="entry name" value="Acrflvin-R"/>
</dbReference>
<dbReference type="InterPro" id="IPR023931">
    <property type="entry name" value="Multidrug-R_MdtC"/>
</dbReference>
<dbReference type="NCBIfam" id="NF007905">
    <property type="entry name" value="PRK10614.1"/>
    <property type="match status" value="1"/>
</dbReference>
<dbReference type="NCBIfam" id="NF033617">
    <property type="entry name" value="RND_permease_2"/>
    <property type="match status" value="1"/>
</dbReference>
<dbReference type="PANTHER" id="PTHR32063">
    <property type="match status" value="1"/>
</dbReference>
<dbReference type="PANTHER" id="PTHR32063:SF34">
    <property type="entry name" value="MULTIDRUG RESISTANCE PROTEIN MDTC"/>
    <property type="match status" value="1"/>
</dbReference>
<dbReference type="Pfam" id="PF00873">
    <property type="entry name" value="ACR_tran"/>
    <property type="match status" value="1"/>
</dbReference>
<dbReference type="PRINTS" id="PR00702">
    <property type="entry name" value="ACRIFLAVINRP"/>
</dbReference>
<dbReference type="SUPFAM" id="SSF82693">
    <property type="entry name" value="Multidrug efflux transporter AcrB pore domain, PN1, PN2, PC1 and PC2 subdomains"/>
    <property type="match status" value="4"/>
</dbReference>
<dbReference type="SUPFAM" id="SSF82714">
    <property type="entry name" value="Multidrug efflux transporter AcrB TolC docking domain, DN and DC subdomains"/>
    <property type="match status" value="2"/>
</dbReference>
<dbReference type="SUPFAM" id="SSF82866">
    <property type="entry name" value="Multidrug efflux transporter AcrB transmembrane domain"/>
    <property type="match status" value="2"/>
</dbReference>
<organism>
    <name type="scientific">Escherichia coli O127:H6 (strain E2348/69 / EPEC)</name>
    <dbReference type="NCBI Taxonomy" id="574521"/>
    <lineage>
        <taxon>Bacteria</taxon>
        <taxon>Pseudomonadati</taxon>
        <taxon>Pseudomonadota</taxon>
        <taxon>Gammaproteobacteria</taxon>
        <taxon>Enterobacterales</taxon>
        <taxon>Enterobacteriaceae</taxon>
        <taxon>Escherichia</taxon>
    </lineage>
</organism>
<accession>B7UTB4</accession>
<comment type="function">
    <text evidence="1">The MdtABC tripartite complex confers resistance against novobiocin and deoxycholate.</text>
</comment>
<comment type="subunit">
    <text evidence="1">Part of a tripartite efflux system composed of MdtA, MdtB and MdtC. MdtC forms a heteromultimer with MdtB.</text>
</comment>
<comment type="subcellular location">
    <subcellularLocation>
        <location evidence="1">Cell inner membrane</location>
        <topology evidence="1">Multi-pass membrane protein</topology>
    </subcellularLocation>
</comment>
<comment type="induction">
    <text>The mdtABC operon is transcriptionally activated by BaeR.</text>
</comment>
<comment type="similarity">
    <text evidence="1">Belongs to the resistance-nodulation-cell division (RND) (TC 2.A.6) family. MdtC subfamily.</text>
</comment>
<reference key="1">
    <citation type="journal article" date="2009" name="J. Bacteriol.">
        <title>Complete genome sequence and comparative genome analysis of enteropathogenic Escherichia coli O127:H6 strain E2348/69.</title>
        <authorList>
            <person name="Iguchi A."/>
            <person name="Thomson N.R."/>
            <person name="Ogura Y."/>
            <person name="Saunders D."/>
            <person name="Ooka T."/>
            <person name="Henderson I.R."/>
            <person name="Harris D."/>
            <person name="Asadulghani M."/>
            <person name="Kurokawa K."/>
            <person name="Dean P."/>
            <person name="Kenny B."/>
            <person name="Quail M.A."/>
            <person name="Thurston S."/>
            <person name="Dougan G."/>
            <person name="Hayashi T."/>
            <person name="Parkhill J."/>
            <person name="Frankel G."/>
        </authorList>
    </citation>
    <scope>NUCLEOTIDE SEQUENCE [LARGE SCALE GENOMIC DNA]</scope>
    <source>
        <strain>E2348/69 / EPEC</strain>
    </source>
</reference>
<feature type="chain" id="PRO_1000184868" description="Multidrug resistance protein MdtC">
    <location>
        <begin position="1"/>
        <end position="1025"/>
    </location>
</feature>
<feature type="transmembrane region" description="Helical" evidence="1">
    <location>
        <begin position="3"/>
        <end position="23"/>
    </location>
</feature>
<feature type="transmembrane region" description="Helical" evidence="1">
    <location>
        <begin position="333"/>
        <end position="353"/>
    </location>
</feature>
<feature type="transmembrane region" description="Helical" evidence="1">
    <location>
        <begin position="360"/>
        <end position="380"/>
    </location>
</feature>
<feature type="transmembrane region" description="Helical" evidence="1">
    <location>
        <begin position="387"/>
        <end position="407"/>
    </location>
</feature>
<feature type="transmembrane region" description="Helical" evidence="1">
    <location>
        <begin position="431"/>
        <end position="451"/>
    </location>
</feature>
<feature type="transmembrane region" description="Helical" evidence="1">
    <location>
        <begin position="463"/>
        <end position="483"/>
    </location>
</feature>
<feature type="transmembrane region" description="Helical" evidence="1">
    <location>
        <begin position="528"/>
        <end position="548"/>
    </location>
</feature>
<feature type="transmembrane region" description="Helical" evidence="1">
    <location>
        <begin position="853"/>
        <end position="873"/>
    </location>
</feature>
<feature type="transmembrane region" description="Helical" evidence="1">
    <location>
        <begin position="875"/>
        <end position="895"/>
    </location>
</feature>
<feature type="transmembrane region" description="Helical" evidence="1">
    <location>
        <begin position="897"/>
        <end position="917"/>
    </location>
</feature>
<feature type="transmembrane region" description="Helical" evidence="1">
    <location>
        <begin position="953"/>
        <end position="973"/>
    </location>
</feature>
<feature type="transmembrane region" description="Helical" evidence="1">
    <location>
        <begin position="984"/>
        <end position="1004"/>
    </location>
</feature>
<name>MDTC_ECO27</name>
<gene>
    <name evidence="1" type="primary">mdtC</name>
    <name type="ordered locus">E2348C_2219</name>
</gene>
<evidence type="ECO:0000255" key="1">
    <source>
        <dbReference type="HAMAP-Rule" id="MF_01424"/>
    </source>
</evidence>
<protein>
    <recommendedName>
        <fullName evidence="1">Multidrug resistance protein MdtC</fullName>
    </recommendedName>
    <alternativeName>
        <fullName evidence="1">Multidrug transporter MdtC</fullName>
    </alternativeName>
</protein>